<comment type="function">
    <text evidence="1">Required for maturation of urease via the functional incorporation of the urease nickel metallocenter.</text>
</comment>
<comment type="subunit">
    <text evidence="1">UreD, UreF and UreG form a complex that acts as a GTP-hydrolysis-dependent molecular chaperone, activating the urease apoprotein by helping to assemble the nickel containing metallocenter of UreC. The UreE protein probably delivers the nickel.</text>
</comment>
<comment type="subcellular location">
    <subcellularLocation>
        <location evidence="1">Cytoplasm</location>
    </subcellularLocation>
</comment>
<comment type="similarity">
    <text evidence="1">Belongs to the UreD family.</text>
</comment>
<dbReference type="EMBL" id="CP000577">
    <property type="protein sequence ID" value="ABN77059.1"/>
    <property type="molecule type" value="Genomic_DNA"/>
</dbReference>
<dbReference type="RefSeq" id="WP_011841342.1">
    <property type="nucleotide sequence ID" value="NC_009049.1"/>
</dbReference>
<dbReference type="SMR" id="A3PL43"/>
<dbReference type="KEGG" id="rsh:Rsph17029_1955"/>
<dbReference type="HOGENOM" id="CLU_056339_2_0_5"/>
<dbReference type="GO" id="GO:0005737">
    <property type="term" value="C:cytoplasm"/>
    <property type="evidence" value="ECO:0007669"/>
    <property type="project" value="UniProtKB-SubCell"/>
</dbReference>
<dbReference type="GO" id="GO:0016151">
    <property type="term" value="F:nickel cation binding"/>
    <property type="evidence" value="ECO:0007669"/>
    <property type="project" value="UniProtKB-UniRule"/>
</dbReference>
<dbReference type="HAMAP" id="MF_01384">
    <property type="entry name" value="UreD"/>
    <property type="match status" value="1"/>
</dbReference>
<dbReference type="InterPro" id="IPR002669">
    <property type="entry name" value="UreD"/>
</dbReference>
<dbReference type="PANTHER" id="PTHR33643">
    <property type="entry name" value="UREASE ACCESSORY PROTEIN D"/>
    <property type="match status" value="1"/>
</dbReference>
<dbReference type="PANTHER" id="PTHR33643:SF1">
    <property type="entry name" value="UREASE ACCESSORY PROTEIN D"/>
    <property type="match status" value="1"/>
</dbReference>
<dbReference type="Pfam" id="PF01774">
    <property type="entry name" value="UreD"/>
    <property type="match status" value="1"/>
</dbReference>
<proteinExistence type="inferred from homology"/>
<reference key="1">
    <citation type="submission" date="2007-02" db="EMBL/GenBank/DDBJ databases">
        <title>Complete sequence of chromosome 1 of Rhodobacter sphaeroides ATCC 17029.</title>
        <authorList>
            <person name="Copeland A."/>
            <person name="Lucas S."/>
            <person name="Lapidus A."/>
            <person name="Barry K."/>
            <person name="Detter J.C."/>
            <person name="Glavina del Rio T."/>
            <person name="Hammon N."/>
            <person name="Israni S."/>
            <person name="Dalin E."/>
            <person name="Tice H."/>
            <person name="Pitluck S."/>
            <person name="Kiss H."/>
            <person name="Brettin T."/>
            <person name="Bruce D."/>
            <person name="Han C."/>
            <person name="Tapia R."/>
            <person name="Gilna P."/>
            <person name="Schmutz J."/>
            <person name="Larimer F."/>
            <person name="Land M."/>
            <person name="Hauser L."/>
            <person name="Kyrpides N."/>
            <person name="Mikhailova N."/>
            <person name="Richardson P."/>
            <person name="Mackenzie C."/>
            <person name="Choudhary M."/>
            <person name="Donohue T.J."/>
            <person name="Kaplan S."/>
        </authorList>
    </citation>
    <scope>NUCLEOTIDE SEQUENCE [LARGE SCALE GENOMIC DNA]</scope>
    <source>
        <strain>ATCC 17029 / ATH 2.4.9</strain>
    </source>
</reference>
<organism>
    <name type="scientific">Cereibacter sphaeroides (strain ATCC 17029 / ATH 2.4.9)</name>
    <name type="common">Rhodobacter sphaeroides</name>
    <dbReference type="NCBI Taxonomy" id="349101"/>
    <lineage>
        <taxon>Bacteria</taxon>
        <taxon>Pseudomonadati</taxon>
        <taxon>Pseudomonadota</taxon>
        <taxon>Alphaproteobacteria</taxon>
        <taxon>Rhodobacterales</taxon>
        <taxon>Paracoccaceae</taxon>
        <taxon>Cereibacter</taxon>
    </lineage>
</organism>
<feature type="chain" id="PRO_0000340507" description="Urease accessory protein UreD">
    <location>
        <begin position="1"/>
        <end position="275"/>
    </location>
</feature>
<sequence length="275" mass="28726">MNALTPLSARLERSDGHALVTLARSRGAVRLRDLAQRGSAKAFLPRVEGDVPEVVFLNTSGGLTGGDRLSYRLELGAGCRATATTQTAERAYAAGAGAARVEVLHEVGRDGWLDWLPQETILFEGAALERETQISLAPGAGCLMVESVVLGRAAMGETLSRLAFRDRRSILRAGKPVLVEPLALDDRALAAAGGAAMLGGARALATLAMVGPGAEDALGPARAALGEAGVEAAASAFDGKLVLRLLAADGWPLRRQVARLLTVLRGRALPRVWQV</sequence>
<evidence type="ECO:0000255" key="1">
    <source>
        <dbReference type="HAMAP-Rule" id="MF_01384"/>
    </source>
</evidence>
<accession>A3PL43</accession>
<keyword id="KW-0143">Chaperone</keyword>
<keyword id="KW-0963">Cytoplasm</keyword>
<keyword id="KW-0996">Nickel insertion</keyword>
<gene>
    <name evidence="1" type="primary">ureD</name>
    <name type="ordered locus">Rsph17029_1955</name>
</gene>
<name>URED_CERS1</name>
<protein>
    <recommendedName>
        <fullName evidence="1">Urease accessory protein UreD</fullName>
    </recommendedName>
</protein>